<comment type="function">
    <text evidence="1">May play a role in DNA repair. It seems to be involved in an RecBC-independent recombinational process of DNA repair. It may act with RecF and RecO.</text>
</comment>
<comment type="similarity">
    <text evidence="1">Belongs to the RecR family.</text>
</comment>
<organism>
    <name type="scientific">Listeria innocua serovar 6a (strain ATCC BAA-680 / CLIP 11262)</name>
    <dbReference type="NCBI Taxonomy" id="272626"/>
    <lineage>
        <taxon>Bacteria</taxon>
        <taxon>Bacillati</taxon>
        <taxon>Bacillota</taxon>
        <taxon>Bacilli</taxon>
        <taxon>Bacillales</taxon>
        <taxon>Listeriaceae</taxon>
        <taxon>Listeria</taxon>
    </lineage>
</organism>
<protein>
    <recommendedName>
        <fullName evidence="1">Recombination protein RecR</fullName>
    </recommendedName>
</protein>
<dbReference type="EMBL" id="AL596173">
    <property type="protein sequence ID" value="CAC98076.1"/>
    <property type="molecule type" value="Genomic_DNA"/>
</dbReference>
<dbReference type="PIR" id="AD1788">
    <property type="entry name" value="AD1788"/>
</dbReference>
<dbReference type="RefSeq" id="WP_003764287.1">
    <property type="nucleotide sequence ID" value="NC_003212.1"/>
</dbReference>
<dbReference type="SMR" id="Q927D9"/>
<dbReference type="STRING" id="272626.gene:17567237"/>
<dbReference type="GeneID" id="93236124"/>
<dbReference type="KEGG" id="lin:recR"/>
<dbReference type="eggNOG" id="COG0353">
    <property type="taxonomic scope" value="Bacteria"/>
</dbReference>
<dbReference type="HOGENOM" id="CLU_060739_1_0_9"/>
<dbReference type="OrthoDB" id="9802672at2"/>
<dbReference type="Proteomes" id="UP000002513">
    <property type="component" value="Chromosome"/>
</dbReference>
<dbReference type="GO" id="GO:0003677">
    <property type="term" value="F:DNA binding"/>
    <property type="evidence" value="ECO:0007669"/>
    <property type="project" value="UniProtKB-UniRule"/>
</dbReference>
<dbReference type="GO" id="GO:0008270">
    <property type="term" value="F:zinc ion binding"/>
    <property type="evidence" value="ECO:0007669"/>
    <property type="project" value="UniProtKB-KW"/>
</dbReference>
<dbReference type="GO" id="GO:0006310">
    <property type="term" value="P:DNA recombination"/>
    <property type="evidence" value="ECO:0007669"/>
    <property type="project" value="UniProtKB-UniRule"/>
</dbReference>
<dbReference type="GO" id="GO:0006281">
    <property type="term" value="P:DNA repair"/>
    <property type="evidence" value="ECO:0007669"/>
    <property type="project" value="UniProtKB-UniRule"/>
</dbReference>
<dbReference type="CDD" id="cd01025">
    <property type="entry name" value="TOPRIM_recR"/>
    <property type="match status" value="1"/>
</dbReference>
<dbReference type="Gene3D" id="3.30.60.80">
    <property type="match status" value="1"/>
</dbReference>
<dbReference type="Gene3D" id="3.40.1360.10">
    <property type="match status" value="1"/>
</dbReference>
<dbReference type="Gene3D" id="6.10.250.240">
    <property type="match status" value="1"/>
</dbReference>
<dbReference type="Gene3D" id="1.10.8.420">
    <property type="entry name" value="RecR Domain 1"/>
    <property type="match status" value="1"/>
</dbReference>
<dbReference type="HAMAP" id="MF_00017">
    <property type="entry name" value="RecR"/>
    <property type="match status" value="1"/>
</dbReference>
<dbReference type="InterPro" id="IPR000093">
    <property type="entry name" value="DNA_Rcmb_RecR"/>
</dbReference>
<dbReference type="InterPro" id="IPR023627">
    <property type="entry name" value="Rcmb_RecR"/>
</dbReference>
<dbReference type="InterPro" id="IPR015967">
    <property type="entry name" value="Rcmb_RecR_Znf"/>
</dbReference>
<dbReference type="InterPro" id="IPR006171">
    <property type="entry name" value="TOPRIM_dom"/>
</dbReference>
<dbReference type="InterPro" id="IPR034137">
    <property type="entry name" value="TOPRIM_RecR"/>
</dbReference>
<dbReference type="NCBIfam" id="TIGR00615">
    <property type="entry name" value="recR"/>
    <property type="match status" value="1"/>
</dbReference>
<dbReference type="PANTHER" id="PTHR30446">
    <property type="entry name" value="RECOMBINATION PROTEIN RECR"/>
    <property type="match status" value="1"/>
</dbReference>
<dbReference type="PANTHER" id="PTHR30446:SF0">
    <property type="entry name" value="RECOMBINATION PROTEIN RECR"/>
    <property type="match status" value="1"/>
</dbReference>
<dbReference type="Pfam" id="PF21175">
    <property type="entry name" value="RecR_C"/>
    <property type="match status" value="1"/>
</dbReference>
<dbReference type="Pfam" id="PF21176">
    <property type="entry name" value="RecR_HhH"/>
    <property type="match status" value="1"/>
</dbReference>
<dbReference type="Pfam" id="PF02132">
    <property type="entry name" value="RecR_ZnF"/>
    <property type="match status" value="1"/>
</dbReference>
<dbReference type="Pfam" id="PF13662">
    <property type="entry name" value="Toprim_4"/>
    <property type="match status" value="1"/>
</dbReference>
<dbReference type="SMART" id="SM00493">
    <property type="entry name" value="TOPRIM"/>
    <property type="match status" value="1"/>
</dbReference>
<dbReference type="SUPFAM" id="SSF111304">
    <property type="entry name" value="Recombination protein RecR"/>
    <property type="match status" value="1"/>
</dbReference>
<dbReference type="PROSITE" id="PS01300">
    <property type="entry name" value="RECR"/>
    <property type="match status" value="1"/>
</dbReference>
<dbReference type="PROSITE" id="PS50880">
    <property type="entry name" value="TOPRIM"/>
    <property type="match status" value="1"/>
</dbReference>
<keyword id="KW-0227">DNA damage</keyword>
<keyword id="KW-0233">DNA recombination</keyword>
<keyword id="KW-0234">DNA repair</keyword>
<keyword id="KW-0479">Metal-binding</keyword>
<keyword id="KW-0862">Zinc</keyword>
<keyword id="KW-0863">Zinc-finger</keyword>
<evidence type="ECO:0000255" key="1">
    <source>
        <dbReference type="HAMAP-Rule" id="MF_00017"/>
    </source>
</evidence>
<sequence>MHYPEPITKLMDSFMKLPGIGPKSAARLAFYVLDMKEDDVLDFAKALVDAKRNLSFCSVCGHITDKDPCYICSDTSRDRSVLCVVQESKDVIAMEKMRDFHGLYHVLHGTISPMDGIGPEDINIPDLLKRLQDDTIEEVILATNPNVEGEATAMYISRLLRPSGIKVTRIAHGLPVGGDLEYADEVTLSKAMEGRREV</sequence>
<feature type="chain" id="PRO_0000190343" description="Recombination protein RecR">
    <location>
        <begin position="1"/>
        <end position="198"/>
    </location>
</feature>
<feature type="domain" description="Toprim" evidence="1">
    <location>
        <begin position="80"/>
        <end position="175"/>
    </location>
</feature>
<feature type="zinc finger region" description="C4-type" evidence="1">
    <location>
        <begin position="57"/>
        <end position="72"/>
    </location>
</feature>
<proteinExistence type="inferred from homology"/>
<reference key="1">
    <citation type="journal article" date="2001" name="Science">
        <title>Comparative genomics of Listeria species.</title>
        <authorList>
            <person name="Glaser P."/>
            <person name="Frangeul L."/>
            <person name="Buchrieser C."/>
            <person name="Rusniok C."/>
            <person name="Amend A."/>
            <person name="Baquero F."/>
            <person name="Berche P."/>
            <person name="Bloecker H."/>
            <person name="Brandt P."/>
            <person name="Chakraborty T."/>
            <person name="Charbit A."/>
            <person name="Chetouani F."/>
            <person name="Couve E."/>
            <person name="de Daruvar A."/>
            <person name="Dehoux P."/>
            <person name="Domann E."/>
            <person name="Dominguez-Bernal G."/>
            <person name="Duchaud E."/>
            <person name="Durant L."/>
            <person name="Dussurget O."/>
            <person name="Entian K.-D."/>
            <person name="Fsihi H."/>
            <person name="Garcia-del Portillo F."/>
            <person name="Garrido P."/>
            <person name="Gautier L."/>
            <person name="Goebel W."/>
            <person name="Gomez-Lopez N."/>
            <person name="Hain T."/>
            <person name="Hauf J."/>
            <person name="Jackson D."/>
            <person name="Jones L.-M."/>
            <person name="Kaerst U."/>
            <person name="Kreft J."/>
            <person name="Kuhn M."/>
            <person name="Kunst F."/>
            <person name="Kurapkat G."/>
            <person name="Madueno E."/>
            <person name="Maitournam A."/>
            <person name="Mata Vicente J."/>
            <person name="Ng E."/>
            <person name="Nedjari H."/>
            <person name="Nordsiek G."/>
            <person name="Novella S."/>
            <person name="de Pablos B."/>
            <person name="Perez-Diaz J.-C."/>
            <person name="Purcell R."/>
            <person name="Remmel B."/>
            <person name="Rose M."/>
            <person name="Schlueter T."/>
            <person name="Simoes N."/>
            <person name="Tierrez A."/>
            <person name="Vazquez-Boland J.-A."/>
            <person name="Voss H."/>
            <person name="Wehland J."/>
            <person name="Cossart P."/>
        </authorList>
    </citation>
    <scope>NUCLEOTIDE SEQUENCE [LARGE SCALE GENOMIC DNA]</scope>
    <source>
        <strain>ATCC BAA-680 / CLIP 11262</strain>
    </source>
</reference>
<name>RECR_LISIN</name>
<accession>Q927D9</accession>
<gene>
    <name evidence="1" type="primary">recR</name>
    <name type="ordered locus">lin2850</name>
</gene>